<feature type="chain" id="PRO_1000061331" description="Flap endonuclease 1">
    <location>
        <begin position="1"/>
        <end position="346"/>
    </location>
</feature>
<feature type="region of interest" description="N-domain">
    <location>
        <begin position="1"/>
        <end position="102"/>
    </location>
</feature>
<feature type="region of interest" description="I-domain">
    <location>
        <begin position="120"/>
        <end position="261"/>
    </location>
</feature>
<feature type="binding site" evidence="2">
    <location>
        <position position="31"/>
    </location>
    <ligand>
        <name>Mg(2+)</name>
        <dbReference type="ChEBI" id="CHEBI:18420"/>
        <label>1</label>
    </ligand>
</feature>
<feature type="binding site" evidence="2">
    <location>
        <position position="84"/>
    </location>
    <ligand>
        <name>Mg(2+)</name>
        <dbReference type="ChEBI" id="CHEBI:18420"/>
        <label>1</label>
    </ligand>
</feature>
<feature type="binding site" evidence="2">
    <location>
        <position position="156"/>
    </location>
    <ligand>
        <name>Mg(2+)</name>
        <dbReference type="ChEBI" id="CHEBI:18420"/>
        <label>1</label>
    </ligand>
</feature>
<feature type="binding site" evidence="2">
    <location>
        <position position="158"/>
    </location>
    <ligand>
        <name>Mg(2+)</name>
        <dbReference type="ChEBI" id="CHEBI:18420"/>
        <label>1</label>
    </ligand>
</feature>
<feature type="binding site" evidence="2">
    <location>
        <position position="177"/>
    </location>
    <ligand>
        <name>Mg(2+)</name>
        <dbReference type="ChEBI" id="CHEBI:18420"/>
        <label>2</label>
    </ligand>
</feature>
<feature type="binding site" evidence="2">
    <location>
        <position position="179"/>
    </location>
    <ligand>
        <name>Mg(2+)</name>
        <dbReference type="ChEBI" id="CHEBI:18420"/>
        <label>2</label>
    </ligand>
</feature>
<feature type="binding site" evidence="2">
    <location>
        <position position="239"/>
    </location>
    <ligand>
        <name>Mg(2+)</name>
        <dbReference type="ChEBI" id="CHEBI:18420"/>
        <label>2</label>
    </ligand>
</feature>
<organism>
    <name type="scientific">Pyrobaculum calidifontis (strain DSM 21063 / JCM 11548 / VA1)</name>
    <dbReference type="NCBI Taxonomy" id="410359"/>
    <lineage>
        <taxon>Archaea</taxon>
        <taxon>Thermoproteota</taxon>
        <taxon>Thermoprotei</taxon>
        <taxon>Thermoproteales</taxon>
        <taxon>Thermoproteaceae</taxon>
        <taxon>Pyrobaculum</taxon>
    </lineage>
</organism>
<dbReference type="EC" id="3.1.-.-" evidence="2"/>
<dbReference type="EMBL" id="CP000561">
    <property type="protein sequence ID" value="ABO09532.1"/>
    <property type="molecule type" value="Genomic_DNA"/>
</dbReference>
<dbReference type="RefSeq" id="WP_011850790.1">
    <property type="nucleotide sequence ID" value="NC_009073.1"/>
</dbReference>
<dbReference type="SMR" id="A3MY15"/>
<dbReference type="STRING" id="410359.Pcal_2117"/>
<dbReference type="GeneID" id="4908459"/>
<dbReference type="KEGG" id="pcl:Pcal_2117"/>
<dbReference type="eggNOG" id="arCOG04050">
    <property type="taxonomic scope" value="Archaea"/>
</dbReference>
<dbReference type="HOGENOM" id="CLU_032444_0_0_2"/>
<dbReference type="OrthoDB" id="9593at2157"/>
<dbReference type="Proteomes" id="UP000001431">
    <property type="component" value="Chromosome"/>
</dbReference>
<dbReference type="GO" id="GO:0008409">
    <property type="term" value="F:5'-3' exonuclease activity"/>
    <property type="evidence" value="ECO:0007669"/>
    <property type="project" value="UniProtKB-UniRule"/>
</dbReference>
<dbReference type="GO" id="GO:0017108">
    <property type="term" value="F:5'-flap endonuclease activity"/>
    <property type="evidence" value="ECO:0007669"/>
    <property type="project" value="UniProtKB-UniRule"/>
</dbReference>
<dbReference type="GO" id="GO:0003677">
    <property type="term" value="F:DNA binding"/>
    <property type="evidence" value="ECO:0007669"/>
    <property type="project" value="UniProtKB-UniRule"/>
</dbReference>
<dbReference type="GO" id="GO:0000287">
    <property type="term" value="F:magnesium ion binding"/>
    <property type="evidence" value="ECO:0007669"/>
    <property type="project" value="UniProtKB-UniRule"/>
</dbReference>
<dbReference type="GO" id="GO:0006281">
    <property type="term" value="P:DNA repair"/>
    <property type="evidence" value="ECO:0007669"/>
    <property type="project" value="UniProtKB-UniRule"/>
</dbReference>
<dbReference type="GO" id="GO:0043137">
    <property type="term" value="P:DNA replication, removal of RNA primer"/>
    <property type="evidence" value="ECO:0007669"/>
    <property type="project" value="UniProtKB-UniRule"/>
</dbReference>
<dbReference type="CDD" id="cd09903">
    <property type="entry name" value="H3TH_FEN1-Arc"/>
    <property type="match status" value="1"/>
</dbReference>
<dbReference type="CDD" id="cd09867">
    <property type="entry name" value="PIN_FEN1"/>
    <property type="match status" value="1"/>
</dbReference>
<dbReference type="FunFam" id="1.10.150.20:FF:000087">
    <property type="entry name" value="Flap endonuclease 1"/>
    <property type="match status" value="1"/>
</dbReference>
<dbReference type="FunFam" id="3.40.50.1010:FF:000016">
    <property type="entry name" value="Flap endonuclease 1"/>
    <property type="match status" value="1"/>
</dbReference>
<dbReference type="Gene3D" id="1.10.150.20">
    <property type="entry name" value="5' to 3' exonuclease, C-terminal subdomain"/>
    <property type="match status" value="1"/>
</dbReference>
<dbReference type="Gene3D" id="3.40.50.1010">
    <property type="entry name" value="5'-nuclease"/>
    <property type="match status" value="1"/>
</dbReference>
<dbReference type="HAMAP" id="MF_00614">
    <property type="entry name" value="Fen"/>
    <property type="match status" value="1"/>
</dbReference>
<dbReference type="InterPro" id="IPR036279">
    <property type="entry name" value="5-3_exonuclease_C_sf"/>
</dbReference>
<dbReference type="InterPro" id="IPR023426">
    <property type="entry name" value="Flap_endonuc"/>
</dbReference>
<dbReference type="InterPro" id="IPR019973">
    <property type="entry name" value="Flap_endonuc_arc"/>
</dbReference>
<dbReference type="InterPro" id="IPR008918">
    <property type="entry name" value="HhH2"/>
</dbReference>
<dbReference type="InterPro" id="IPR029060">
    <property type="entry name" value="PIN-like_dom_sf"/>
</dbReference>
<dbReference type="InterPro" id="IPR006086">
    <property type="entry name" value="XPG-I_dom"/>
</dbReference>
<dbReference type="InterPro" id="IPR006084">
    <property type="entry name" value="XPG/Rad2"/>
</dbReference>
<dbReference type="InterPro" id="IPR019974">
    <property type="entry name" value="XPG_CS"/>
</dbReference>
<dbReference type="InterPro" id="IPR006085">
    <property type="entry name" value="XPG_DNA_repair_N"/>
</dbReference>
<dbReference type="NCBIfam" id="TIGR03674">
    <property type="entry name" value="fen_arch"/>
    <property type="match status" value="1"/>
</dbReference>
<dbReference type="PANTHER" id="PTHR11081:SF9">
    <property type="entry name" value="FLAP ENDONUCLEASE 1"/>
    <property type="match status" value="1"/>
</dbReference>
<dbReference type="PANTHER" id="PTHR11081">
    <property type="entry name" value="FLAP ENDONUCLEASE FAMILY MEMBER"/>
    <property type="match status" value="1"/>
</dbReference>
<dbReference type="Pfam" id="PF00867">
    <property type="entry name" value="XPG_I"/>
    <property type="match status" value="1"/>
</dbReference>
<dbReference type="Pfam" id="PF00752">
    <property type="entry name" value="XPG_N"/>
    <property type="match status" value="1"/>
</dbReference>
<dbReference type="PRINTS" id="PR00853">
    <property type="entry name" value="XPGRADSUPER"/>
</dbReference>
<dbReference type="SMART" id="SM00279">
    <property type="entry name" value="HhH2"/>
    <property type="match status" value="1"/>
</dbReference>
<dbReference type="SMART" id="SM00484">
    <property type="entry name" value="XPGI"/>
    <property type="match status" value="1"/>
</dbReference>
<dbReference type="SMART" id="SM00485">
    <property type="entry name" value="XPGN"/>
    <property type="match status" value="1"/>
</dbReference>
<dbReference type="SUPFAM" id="SSF47807">
    <property type="entry name" value="5' to 3' exonuclease, C-terminal subdomain"/>
    <property type="match status" value="1"/>
</dbReference>
<dbReference type="SUPFAM" id="SSF88723">
    <property type="entry name" value="PIN domain-like"/>
    <property type="match status" value="1"/>
</dbReference>
<dbReference type="PROSITE" id="PS00841">
    <property type="entry name" value="XPG_1"/>
    <property type="match status" value="1"/>
</dbReference>
<accession>A3MY15</accession>
<keyword id="KW-0227">DNA damage</keyword>
<keyword id="KW-0234">DNA repair</keyword>
<keyword id="KW-0235">DNA replication</keyword>
<keyword id="KW-0255">Endonuclease</keyword>
<keyword id="KW-0269">Exonuclease</keyword>
<keyword id="KW-0378">Hydrolase</keyword>
<keyword id="KW-0460">Magnesium</keyword>
<keyword id="KW-0479">Metal-binding</keyword>
<keyword id="KW-0540">Nuclease</keyword>
<gene>
    <name evidence="2" type="primary">fen</name>
    <name type="ordered locus">Pcal_2117</name>
</gene>
<sequence>MGVTELGKLIGKEARREIKLESLAGKCVALDAYNALYQFLASIRQPDGTPLMDRAGRITSHLSGLFYRTINLLEAGVKPVYVFDGKPPEFKLLEIEQRKKAKEKALEEVEKAIREGRREDVAKYAKRAIFLTSEMVEDAKKLLTYMGIPWVQAPSEGEAQAAHMAKRGHCWAVGSQDYDSLLFGSPRLVRNLAVSPKRKVGEEVVELSPELIELDAVLKSLKLKGREQLIDLAILLGTDYNPEGVPGVGPQKALKLIWEFGSLEKLLQTVLKGVQFPVDPLKIREFFLNPPVTDQYSTELSTPDERKIVELLVEEHDFSQERVAKALERLAKARGKVKTTSLDAFF</sequence>
<reference key="1">
    <citation type="submission" date="2007-02" db="EMBL/GenBank/DDBJ databases">
        <title>Complete sequence of Pyrobaculum calidifontis JCM 11548.</title>
        <authorList>
            <consortium name="US DOE Joint Genome Institute"/>
            <person name="Copeland A."/>
            <person name="Lucas S."/>
            <person name="Lapidus A."/>
            <person name="Barry K."/>
            <person name="Glavina del Rio T."/>
            <person name="Dalin E."/>
            <person name="Tice H."/>
            <person name="Pitluck S."/>
            <person name="Chain P."/>
            <person name="Malfatti S."/>
            <person name="Shin M."/>
            <person name="Vergez L."/>
            <person name="Schmutz J."/>
            <person name="Larimer F."/>
            <person name="Land M."/>
            <person name="Hauser L."/>
            <person name="Kyrpides N."/>
            <person name="Mikhailova N."/>
            <person name="Cozen A.E."/>
            <person name="Fitz-Gibbon S.T."/>
            <person name="House C.H."/>
            <person name="Saltikov C."/>
            <person name="Lowe T.M."/>
            <person name="Richardson P."/>
        </authorList>
    </citation>
    <scope>NUCLEOTIDE SEQUENCE [LARGE SCALE GENOMIC DNA]</scope>
    <source>
        <strain>DSM 21063 / JCM 11548 / VA1</strain>
    </source>
</reference>
<protein>
    <recommendedName>
        <fullName evidence="2">Flap endonuclease 1</fullName>
        <shortName evidence="2">FEN-1</shortName>
        <ecNumber evidence="2">3.1.-.-</ecNumber>
    </recommendedName>
    <alternativeName>
        <fullName evidence="2">Flap structure-specific endonuclease 1</fullName>
    </alternativeName>
</protein>
<name>FEN_PYRCJ</name>
<evidence type="ECO:0000250" key="1"/>
<evidence type="ECO:0000255" key="2">
    <source>
        <dbReference type="HAMAP-Rule" id="MF_00614"/>
    </source>
</evidence>
<proteinExistence type="inferred from homology"/>
<comment type="function">
    <text evidence="1">Structure-specific nuclease with 5'-flap endonuclease and 5'-3' exonuclease activities involved in DNA replication and repair. During DNA replication, cleaves the 5'-overhanging flap structure that is generated by displacement synthesis when DNA polymerase encounters the 5'-end of a downstream Okazaki fragment. Binds the unpaired 3'-DNA end and kinks the DNA to facilitate 5' cleavage specificity. Cleaves one nucleotide into the double-stranded DNA from the junction in flap DNA, leaving a nick for ligation. Also involved in the base excision repair (BER) pathway. Acts as a genome stabilization factor that prevents flaps from equilibrating into structures that lead to duplications and deletions. Also possesses 5'-3' exonuclease activity on nicked or gapped double-stranded DNA (By similarity).</text>
</comment>
<comment type="cofactor">
    <cofactor evidence="2">
        <name>Mg(2+)</name>
        <dbReference type="ChEBI" id="CHEBI:18420"/>
    </cofactor>
    <text evidence="2">Binds 2 magnesium ions per subunit. They probably participate in the reaction catalyzed by the enzyme. May bind an additional third magnesium ion after substrate binding.</text>
</comment>
<comment type="subunit">
    <text evidence="2">Interacts with PCNA. PCNA stimulates the nuclease activity without altering cleavage specificity.</text>
</comment>
<comment type="similarity">
    <text evidence="2">Belongs to the XPG/RAD2 endonuclease family. FEN1 subfamily.</text>
</comment>